<organism>
    <name type="scientific">Euglena gracilis</name>
    <dbReference type="NCBI Taxonomy" id="3039"/>
    <lineage>
        <taxon>Eukaryota</taxon>
        <taxon>Discoba</taxon>
        <taxon>Euglenozoa</taxon>
        <taxon>Euglenida</taxon>
        <taxon>Spirocuta</taxon>
        <taxon>Euglenophyceae</taxon>
        <taxon>Euglenales</taxon>
        <taxon>Euglenaceae</taxon>
        <taxon>Euglena</taxon>
    </lineage>
</organism>
<comment type="subcellular location">
    <subcellularLocation>
        <location>Plastid</location>
        <location>Chloroplast</location>
    </subcellularLocation>
</comment>
<geneLocation type="chloroplast"/>
<keyword id="KW-0150">Chloroplast</keyword>
<keyword id="KW-0934">Plastid</keyword>
<dbReference type="EMBL" id="Z11874">
    <property type="status" value="NOT_ANNOTATED_CDS"/>
    <property type="molecule type" value="Genomic_DNA"/>
</dbReference>
<dbReference type="EMBL" id="X70810">
    <property type="protein sequence ID" value="CAA50126.1"/>
    <property type="molecule type" value="Genomic_DNA"/>
</dbReference>
<dbReference type="PIR" id="S34545">
    <property type="entry name" value="S34545"/>
</dbReference>
<dbReference type="RefSeq" id="NP_041939.1">
    <property type="nucleotide sequence ID" value="NC_001603.2"/>
</dbReference>
<dbReference type="GeneID" id="1457329"/>
<dbReference type="GO" id="GO:0009507">
    <property type="term" value="C:chloroplast"/>
    <property type="evidence" value="ECO:0007669"/>
    <property type="project" value="UniProtKB-SubCell"/>
</dbReference>
<feature type="chain" id="PRO_0000217439" description="Uncharacterized 33.1 kDa protein in rbcL-atpE intergenic region">
    <location>
        <begin position="1"/>
        <end position="281"/>
    </location>
</feature>
<protein>
    <recommendedName>
        <fullName>Uncharacterized 33.1 kDa protein in rbcL-atpE intergenic region</fullName>
    </recommendedName>
    <alternativeName>
        <fullName>ORF281B</fullName>
    </alternativeName>
</protein>
<name>YCX8_EUGGR</name>
<accession>P31919</accession>
<proteinExistence type="predicted"/>
<reference key="1">
    <citation type="journal article" date="1993" name="Nucleic Acids Res.">
        <title>Complete sequence of Euglena gracilis chloroplast DNA.</title>
        <authorList>
            <person name="Hallick R.B."/>
            <person name="Hong L."/>
            <person name="Drager R.G."/>
            <person name="Favreau M.R."/>
            <person name="Monfort A."/>
            <person name="Orsat B."/>
            <person name="Spielmann A."/>
            <person name="Stutz E."/>
        </authorList>
    </citation>
    <scope>NUCLEOTIDE SEQUENCE [LARGE SCALE GENOMIC DNA]</scope>
    <source>
        <strain>Z / UTEX 753</strain>
    </source>
</reference>
<sequence>MASPSILKKYGKYFEYCPLEERMIELAKKGEIADAMLLFEKEKPSEFVYKGDAIEKRLRNIYLSTRLGVKAKINFNDYVIPRDLRWMLDIYESYLNMGENKVFLILGGELRYLIDFFESYLQFKGFYLLVVKEAKDLLRFRNTCHYDAIIFSDSSILEYQNVDELKNLFNSLETTLKVHNRKNSVKVLLSPALPKAIMSSKPYKVLEQFFKEKGIEMEGILPYQLNADDKLLPPHFHNSEMEKSKEYRELESKTKVYIQEFLKKANMNDENEGNDNQKNTN</sequence>